<accession>C5D802</accession>
<protein>
    <recommendedName>
        <fullName evidence="1">2-oxoglutarate dehydrogenase E1 component</fullName>
        <ecNumber evidence="1">1.2.4.2</ecNumber>
    </recommendedName>
    <alternativeName>
        <fullName evidence="1">Alpha-ketoglutarate dehydrogenase</fullName>
    </alternativeName>
</protein>
<reference key="1">
    <citation type="submission" date="2009-06" db="EMBL/GenBank/DDBJ databases">
        <title>Complete sequence of chromosome of Geopacillus sp. WCH70.</title>
        <authorList>
            <consortium name="US DOE Joint Genome Institute"/>
            <person name="Lucas S."/>
            <person name="Copeland A."/>
            <person name="Lapidus A."/>
            <person name="Glavina del Rio T."/>
            <person name="Dalin E."/>
            <person name="Tice H."/>
            <person name="Bruce D."/>
            <person name="Goodwin L."/>
            <person name="Pitluck S."/>
            <person name="Chertkov O."/>
            <person name="Brettin T."/>
            <person name="Detter J.C."/>
            <person name="Han C."/>
            <person name="Larimer F."/>
            <person name="Land M."/>
            <person name="Hauser L."/>
            <person name="Kyrpides N."/>
            <person name="Mikhailova N."/>
            <person name="Brumm P."/>
            <person name="Mead D.A."/>
            <person name="Richardson P."/>
        </authorList>
    </citation>
    <scope>NUCLEOTIDE SEQUENCE [LARGE SCALE GENOMIC DNA]</scope>
    <source>
        <strain>WCH70</strain>
    </source>
</reference>
<proteinExistence type="inferred from homology"/>
<feature type="chain" id="PRO_1000213736" description="2-oxoglutarate dehydrogenase E1 component">
    <location>
        <begin position="1"/>
        <end position="952"/>
    </location>
</feature>
<evidence type="ECO:0000255" key="1">
    <source>
        <dbReference type="HAMAP-Rule" id="MF_01169"/>
    </source>
</evidence>
<keyword id="KW-0324">Glycolysis</keyword>
<keyword id="KW-0560">Oxidoreductase</keyword>
<keyword id="KW-0786">Thiamine pyrophosphate</keyword>
<gene>
    <name evidence="1" type="primary">odhA</name>
    <name type="ordered locus">GWCH70_0919</name>
</gene>
<comment type="function">
    <text evidence="1">E1 component of the 2-oxoglutarate dehydrogenase (OGDH) complex which catalyzes the decarboxylation of 2-oxoglutarate, the first step in the conversion of 2-oxoglutarate to succinyl-CoA and CO(2).</text>
</comment>
<comment type="catalytic activity">
    <reaction evidence="1">
        <text>N(6)-[(R)-lipoyl]-L-lysyl-[protein] + 2-oxoglutarate + H(+) = N(6)-[(R)-S(8)-succinyldihydrolipoyl]-L-lysyl-[protein] + CO2</text>
        <dbReference type="Rhea" id="RHEA:12188"/>
        <dbReference type="Rhea" id="RHEA-COMP:10474"/>
        <dbReference type="Rhea" id="RHEA-COMP:20092"/>
        <dbReference type="ChEBI" id="CHEBI:15378"/>
        <dbReference type="ChEBI" id="CHEBI:16526"/>
        <dbReference type="ChEBI" id="CHEBI:16810"/>
        <dbReference type="ChEBI" id="CHEBI:83099"/>
        <dbReference type="ChEBI" id="CHEBI:83120"/>
        <dbReference type="EC" id="1.2.4.2"/>
    </reaction>
</comment>
<comment type="cofactor">
    <cofactor evidence="1">
        <name>thiamine diphosphate</name>
        <dbReference type="ChEBI" id="CHEBI:58937"/>
    </cofactor>
</comment>
<comment type="subunit">
    <text evidence="1">Homodimer. Part of the 2-oxoglutarate dehydrogenase (OGDH) complex composed of E1 (2-oxoglutarate dehydrogenase), E2 (dihydrolipoamide succinyltransferase) and E3 (dihydrolipoamide dehydrogenase); the complex contains multiple copies of the three enzymatic components (E1, E2 and E3).</text>
</comment>
<comment type="similarity">
    <text evidence="1">Belongs to the alpha-ketoglutarate dehydrogenase family.</text>
</comment>
<organism>
    <name type="scientific">Geobacillus sp. (strain WCH70)</name>
    <dbReference type="NCBI Taxonomy" id="471223"/>
    <lineage>
        <taxon>Bacteria</taxon>
        <taxon>Bacillati</taxon>
        <taxon>Bacillota</taxon>
        <taxon>Bacilli</taxon>
        <taxon>Bacillales</taxon>
        <taxon>Anoxybacillaceae</taxon>
        <taxon>Geobacillus</taxon>
    </lineage>
</organism>
<sequence length="952" mass="108481">MTKQTMNYAEPWSQFYGPNLGYVMEMYEQYLEDPDSVDPELKQLFKEWGAPTTEAERFDHSESAAKTYQTFRLPENPTIFSKLVAAVKLADKIRHYGHLAADINPLNTQNKDTRRIELSEFDLTEDDLKQIPVAFICPHAPAHVKNGLDAINHLRKIYTDKIAFEFSQVHNLEERNWLISQIESGAYYPSLTNEEKVALLRRLTEVEGFEKFLHRTFVGQKRFSIEGLDSMVPLLDELIRHSIEEEVKAVNIGMAHRGRLNVLAHVLGKPYEMIFAEFQHAESKDFMPSEGSVAITYGWTGDVKYHLGAARRLRNKNEHTMRITLANNPSHLEVVNPVVLGFTRAAQEDRSNAGVPSQDTDSAFAIMIHGDAAFPGQGIVAETLNLSRLQGYQTGGSIHIIANNMIGFTTESYDSRSTKYASDIAKGFEIPIVHVNADDPEACLAAANLAFAYRKRFKKDFVIDLIGYRRFGHNEMDEPMATNPTMYSIIQQHPTVRQLYAQKLIEKGIITKEAVEEMEREVAERLKIAYEKVPKDESKLDFIMDPPKPVASKLPFVKTSVEKDVLRRLNKELLQFPSDFHVFNKLERILKRREGVFDGKGKIDWAHAEILAFATILRDGVPIRLTGQDSQRGTFAQRHLVLHDMKTGEEFVPLHHISDANASFVVYNSPLTEAAVLGYEYGYNVFAPETLVLWEAQFGDFANMAQVMFDQFISSGRAKWGQKSGLVMLLPHGYEGQGPEHSSGRLERFLQLAAENNWTVANLSTAAQYFHILRRQAGILQREEVRPLVLMTPKSLLRHPLAASDVEEFTNGQFHPVIEQKGLGENREKVERIILCTGKFAIDLAEQINKMEGLDWLHIVRVEELYPFPKEELQAIFARYPNVKEIIWAQEEPKNMGSWCYVEPKLREIAPDEVDVSYIGRRRRASPAEGDPVVHRKEQERIIQCALTKKEQ</sequence>
<name>ODO1_GEOSW</name>
<dbReference type="EC" id="1.2.4.2" evidence="1"/>
<dbReference type="EMBL" id="CP001638">
    <property type="protein sequence ID" value="ACS23783.1"/>
    <property type="molecule type" value="Genomic_DNA"/>
</dbReference>
<dbReference type="SMR" id="C5D802"/>
<dbReference type="STRING" id="471223.GWCH70_0919"/>
<dbReference type="KEGG" id="gwc:GWCH70_0919"/>
<dbReference type="eggNOG" id="COG0567">
    <property type="taxonomic scope" value="Bacteria"/>
</dbReference>
<dbReference type="HOGENOM" id="CLU_004709_1_0_9"/>
<dbReference type="OrthoDB" id="9759785at2"/>
<dbReference type="GO" id="GO:0005829">
    <property type="term" value="C:cytosol"/>
    <property type="evidence" value="ECO:0007669"/>
    <property type="project" value="TreeGrafter"/>
</dbReference>
<dbReference type="GO" id="GO:0045252">
    <property type="term" value="C:oxoglutarate dehydrogenase complex"/>
    <property type="evidence" value="ECO:0007669"/>
    <property type="project" value="TreeGrafter"/>
</dbReference>
<dbReference type="GO" id="GO:0004591">
    <property type="term" value="F:oxoglutarate dehydrogenase (succinyl-transferring) activity"/>
    <property type="evidence" value="ECO:0007669"/>
    <property type="project" value="UniProtKB-UniRule"/>
</dbReference>
<dbReference type="GO" id="GO:0030976">
    <property type="term" value="F:thiamine pyrophosphate binding"/>
    <property type="evidence" value="ECO:0007669"/>
    <property type="project" value="UniProtKB-UniRule"/>
</dbReference>
<dbReference type="GO" id="GO:0006096">
    <property type="term" value="P:glycolytic process"/>
    <property type="evidence" value="ECO:0007669"/>
    <property type="project" value="UniProtKB-UniRule"/>
</dbReference>
<dbReference type="GO" id="GO:0006099">
    <property type="term" value="P:tricarboxylic acid cycle"/>
    <property type="evidence" value="ECO:0007669"/>
    <property type="project" value="TreeGrafter"/>
</dbReference>
<dbReference type="CDD" id="cd02016">
    <property type="entry name" value="TPP_E1_OGDC_like"/>
    <property type="match status" value="1"/>
</dbReference>
<dbReference type="FunFam" id="3.40.50.11610:FF:000002">
    <property type="entry name" value="2-oxoglutarate dehydrogenase E1 component"/>
    <property type="match status" value="1"/>
</dbReference>
<dbReference type="FunFam" id="3.40.50.970:FF:000036">
    <property type="entry name" value="2-oxoglutarate dehydrogenase E1 component"/>
    <property type="match status" value="1"/>
</dbReference>
<dbReference type="Gene3D" id="3.40.50.12470">
    <property type="match status" value="1"/>
</dbReference>
<dbReference type="Gene3D" id="3.40.50.970">
    <property type="match status" value="1"/>
</dbReference>
<dbReference type="Gene3D" id="3.40.50.11610">
    <property type="entry name" value="Multifunctional 2-oxoglutarate metabolism enzyme, C-terminal domain"/>
    <property type="match status" value="1"/>
</dbReference>
<dbReference type="Gene3D" id="1.10.287.1150">
    <property type="entry name" value="TPP helical domain"/>
    <property type="match status" value="1"/>
</dbReference>
<dbReference type="HAMAP" id="MF_01169">
    <property type="entry name" value="SucA_OdhA"/>
    <property type="match status" value="1"/>
</dbReference>
<dbReference type="InterPro" id="IPR032106">
    <property type="entry name" value="2-oxogl_dehyd_N"/>
</dbReference>
<dbReference type="InterPro" id="IPR011603">
    <property type="entry name" value="2oxoglutarate_DH_E1"/>
</dbReference>
<dbReference type="InterPro" id="IPR023784">
    <property type="entry name" value="2oxoglutarate_DH_E1_bac"/>
</dbReference>
<dbReference type="InterPro" id="IPR001017">
    <property type="entry name" value="DH_E1"/>
</dbReference>
<dbReference type="InterPro" id="IPR042179">
    <property type="entry name" value="KGD_C_sf"/>
</dbReference>
<dbReference type="InterPro" id="IPR031717">
    <property type="entry name" value="ODO-1/KGD_C"/>
</dbReference>
<dbReference type="InterPro" id="IPR029061">
    <property type="entry name" value="THDP-binding"/>
</dbReference>
<dbReference type="InterPro" id="IPR005475">
    <property type="entry name" value="Transketolase-like_Pyr-bd"/>
</dbReference>
<dbReference type="NCBIfam" id="TIGR00239">
    <property type="entry name" value="2oxo_dh_E1"/>
    <property type="match status" value="1"/>
</dbReference>
<dbReference type="NCBIfam" id="NF006914">
    <property type="entry name" value="PRK09404.1"/>
    <property type="match status" value="1"/>
</dbReference>
<dbReference type="NCBIfam" id="NF008907">
    <property type="entry name" value="PRK12270.1"/>
    <property type="match status" value="1"/>
</dbReference>
<dbReference type="PANTHER" id="PTHR23152:SF4">
    <property type="entry name" value="2-OXOADIPATE DEHYDROGENASE COMPLEX COMPONENT E1"/>
    <property type="match status" value="1"/>
</dbReference>
<dbReference type="PANTHER" id="PTHR23152">
    <property type="entry name" value="2-OXOGLUTARATE DEHYDROGENASE"/>
    <property type="match status" value="1"/>
</dbReference>
<dbReference type="Pfam" id="PF16078">
    <property type="entry name" value="2-oxogl_dehyd_N"/>
    <property type="match status" value="1"/>
</dbReference>
<dbReference type="Pfam" id="PF00676">
    <property type="entry name" value="E1_dh"/>
    <property type="match status" value="1"/>
</dbReference>
<dbReference type="Pfam" id="PF16870">
    <property type="entry name" value="OxoGdeHyase_C"/>
    <property type="match status" value="1"/>
</dbReference>
<dbReference type="Pfam" id="PF02779">
    <property type="entry name" value="Transket_pyr"/>
    <property type="match status" value="1"/>
</dbReference>
<dbReference type="PIRSF" id="PIRSF000157">
    <property type="entry name" value="Oxoglu_dh_E1"/>
    <property type="match status" value="1"/>
</dbReference>
<dbReference type="SMART" id="SM00861">
    <property type="entry name" value="Transket_pyr"/>
    <property type="match status" value="1"/>
</dbReference>
<dbReference type="SUPFAM" id="SSF52518">
    <property type="entry name" value="Thiamin diphosphate-binding fold (THDP-binding)"/>
    <property type="match status" value="2"/>
</dbReference>